<organism evidence="7">
    <name type="scientific">Macaca fascicularis</name>
    <name type="common">Crab-eating macaque</name>
    <name type="synonym">Cynomolgus monkey</name>
    <dbReference type="NCBI Taxonomy" id="9541"/>
    <lineage>
        <taxon>Eukaryota</taxon>
        <taxon>Metazoa</taxon>
        <taxon>Chordata</taxon>
        <taxon>Craniata</taxon>
        <taxon>Vertebrata</taxon>
        <taxon>Euteleostomi</taxon>
        <taxon>Mammalia</taxon>
        <taxon>Eutheria</taxon>
        <taxon>Euarchontoglires</taxon>
        <taxon>Primates</taxon>
        <taxon>Haplorrhini</taxon>
        <taxon>Catarrhini</taxon>
        <taxon>Cercopithecidae</taxon>
        <taxon>Cercopithecinae</taxon>
        <taxon>Macaca</taxon>
    </lineage>
</organism>
<gene>
    <name type="primary">SKINT1</name>
</gene>
<evidence type="ECO:0000250" key="1">
    <source>
        <dbReference type="UniProtKB" id="A7TZE6"/>
    </source>
</evidence>
<evidence type="ECO:0000255" key="2"/>
<evidence type="ECO:0000255" key="3">
    <source>
        <dbReference type="PROSITE-ProRule" id="PRU00114"/>
    </source>
</evidence>
<evidence type="ECO:0000269" key="4">
    <source>
    </source>
</evidence>
<evidence type="ECO:0000305" key="5"/>
<evidence type="ECO:0000305" key="6">
    <source>
    </source>
</evidence>
<evidence type="ECO:0000312" key="7">
    <source>
        <dbReference type="EMBL" id="BAR64625.1"/>
    </source>
</evidence>
<reference key="1">
    <citation type="journal article" date="2015" name="PLoS ONE">
        <title>The SKINT1-like gene is inactivated in hominoids but not in all primate species: Implications for the origin of dendritic epidermal T cells.</title>
        <authorList>
            <person name="Mohamed R.H."/>
            <person name="Sutoh Y."/>
            <person name="Itoh Y."/>
            <person name="Otsuka N."/>
            <person name="Miyatake Y."/>
            <person name="Ogasawara K."/>
            <person name="Kasahara M."/>
        </authorList>
    </citation>
    <scope>NUCLEOTIDE SEQUENCE [MRNA]</scope>
    <scope>TISSUE SPECIFICITY</scope>
    <scope>GENE EVOLUTION</scope>
</reference>
<protein>
    <recommendedName>
        <fullName>Selection and upkeep of intraepithelial T-cells protein 1</fullName>
        <shortName>Skint-1</shortName>
    </recommendedName>
</protein>
<proteinExistence type="evidence at transcript level"/>
<dbReference type="EMBL" id="AB974689">
    <property type="protein sequence ID" value="BAR64625.1"/>
    <property type="molecule type" value="mRNA"/>
</dbReference>
<dbReference type="SMR" id="A0A0E4BZH1"/>
<dbReference type="Proteomes" id="UP000233100">
    <property type="component" value="Unplaced"/>
</dbReference>
<dbReference type="GO" id="GO:0009897">
    <property type="term" value="C:external side of plasma membrane"/>
    <property type="evidence" value="ECO:0007669"/>
    <property type="project" value="TreeGrafter"/>
</dbReference>
<dbReference type="GO" id="GO:0005102">
    <property type="term" value="F:signaling receptor binding"/>
    <property type="evidence" value="ECO:0007669"/>
    <property type="project" value="TreeGrafter"/>
</dbReference>
<dbReference type="GO" id="GO:0001817">
    <property type="term" value="P:regulation of cytokine production"/>
    <property type="evidence" value="ECO:0007669"/>
    <property type="project" value="TreeGrafter"/>
</dbReference>
<dbReference type="GO" id="GO:0050852">
    <property type="term" value="P:T cell receptor signaling pathway"/>
    <property type="evidence" value="ECO:0007669"/>
    <property type="project" value="TreeGrafter"/>
</dbReference>
<dbReference type="CDD" id="cd05713">
    <property type="entry name" value="IgV_MOG_like"/>
    <property type="match status" value="1"/>
</dbReference>
<dbReference type="FunFam" id="2.60.40.10:FF:000088">
    <property type="entry name" value="Butyrophilin subfamily 1 member A1"/>
    <property type="match status" value="1"/>
</dbReference>
<dbReference type="FunFam" id="2.60.40.10:FF:000183">
    <property type="entry name" value="Myelin-oligodendrocyte glycoprotein"/>
    <property type="match status" value="1"/>
</dbReference>
<dbReference type="Gene3D" id="2.60.40.10">
    <property type="entry name" value="Immunoglobulins"/>
    <property type="match status" value="2"/>
</dbReference>
<dbReference type="InterPro" id="IPR053896">
    <property type="entry name" value="BTN3A2-like_Ig-C"/>
</dbReference>
<dbReference type="InterPro" id="IPR007110">
    <property type="entry name" value="Ig-like_dom"/>
</dbReference>
<dbReference type="InterPro" id="IPR036179">
    <property type="entry name" value="Ig-like_dom_sf"/>
</dbReference>
<dbReference type="InterPro" id="IPR013783">
    <property type="entry name" value="Ig-like_fold"/>
</dbReference>
<dbReference type="InterPro" id="IPR003599">
    <property type="entry name" value="Ig_sub"/>
</dbReference>
<dbReference type="InterPro" id="IPR013106">
    <property type="entry name" value="Ig_V-set"/>
</dbReference>
<dbReference type="InterPro" id="IPR050504">
    <property type="entry name" value="IgSF_BTN/MOG"/>
</dbReference>
<dbReference type="PANTHER" id="PTHR24100">
    <property type="entry name" value="BUTYROPHILIN"/>
    <property type="match status" value="1"/>
</dbReference>
<dbReference type="PANTHER" id="PTHR24100:SF102">
    <property type="entry name" value="SELECTION AND UPKEEP OF INTRAEPITHELIAL T-CELLS PROTEIN 2-RELATED"/>
    <property type="match status" value="1"/>
</dbReference>
<dbReference type="Pfam" id="PF22705">
    <property type="entry name" value="C2-set_3"/>
    <property type="match status" value="1"/>
</dbReference>
<dbReference type="Pfam" id="PF07686">
    <property type="entry name" value="V-set"/>
    <property type="match status" value="1"/>
</dbReference>
<dbReference type="SMART" id="SM00409">
    <property type="entry name" value="IG"/>
    <property type="match status" value="1"/>
</dbReference>
<dbReference type="SMART" id="SM00406">
    <property type="entry name" value="IGv"/>
    <property type="match status" value="1"/>
</dbReference>
<dbReference type="SUPFAM" id="SSF48726">
    <property type="entry name" value="Immunoglobulin"/>
    <property type="match status" value="2"/>
</dbReference>
<dbReference type="PROSITE" id="PS50835">
    <property type="entry name" value="IG_LIKE"/>
    <property type="match status" value="2"/>
</dbReference>
<keyword id="KW-1015">Disulfide bond</keyword>
<keyword id="KW-0393">Immunoglobulin domain</keyword>
<keyword id="KW-0472">Membrane</keyword>
<keyword id="KW-1185">Reference proteome</keyword>
<keyword id="KW-0812">Transmembrane</keyword>
<keyword id="KW-1133">Transmembrane helix</keyword>
<name>SKIT1_MACFA</name>
<accession>A0A0E4BZH1</accession>
<feature type="chain" id="PRO_0000435873" description="Selection and upkeep of intraepithelial T-cells protein 1">
    <location>
        <begin position="1"/>
        <end position="354"/>
    </location>
</feature>
<feature type="transmembrane region" description="Helical" evidence="2">
    <location>
        <begin position="243"/>
        <end position="263"/>
    </location>
</feature>
<feature type="transmembrane region" description="Helical" evidence="2">
    <location>
        <begin position="283"/>
        <end position="303"/>
    </location>
</feature>
<feature type="transmembrane region" description="Helical" evidence="2">
    <location>
        <begin position="326"/>
        <end position="346"/>
    </location>
</feature>
<feature type="domain" description="Ig-like V-type 1" evidence="3">
    <location>
        <begin position="23"/>
        <end position="141"/>
    </location>
</feature>
<feature type="domain" description="Ig-like C1-type 2" evidence="3">
    <location>
        <begin position="161"/>
        <end position="233"/>
    </location>
</feature>
<feature type="disulfide bond" evidence="3">
    <location>
        <begin position="49"/>
        <end position="123"/>
    </location>
</feature>
<feature type="disulfide bond" evidence="3">
    <location>
        <begin position="163"/>
        <end position="217"/>
    </location>
</feature>
<sequence length="354" mass="40540">METAGLSFSRYFVVMNLLQMTIPSSEQFTVNSLERPVLAALGGNVELSCQLSPPQSAEHMEIRWFRSHYTRPVYLYKEGKDLYGETISKYVERTKLLKEAIGEGKVTLRILNVSADDDGQYHCFFKDGDVYEEAIAEVKVTATSLEIQILIHPPNTKGLLVECNSEGWFPQPQMEWRDSRGGIIPPSSKSHSQNGNKLFNMKMSLLLRDSSHGNITCYLRNPITGQEERTSIVLSDKLFSWDSVWILILVAILAVLLFFIMMPSVELQQREQRRCCDWNSPCLIGIGIVFSSMCVIIGLTITLHHRNRVPVSDRKFQLVSMYLEDMTVMVWVLMVFITMLISLVYFRLRGFFQI</sequence>
<comment type="function">
    <text evidence="1">May act by engaging a cell surface molecule on immature T-cells in the embryonic thymus.</text>
</comment>
<comment type="subcellular location">
    <subcellularLocation>
        <location evidence="2">Membrane</location>
        <topology evidence="2">Multi-pass membrane protein</topology>
    </subcellularLocation>
</comment>
<comment type="tissue specificity">
    <text evidence="4">Expressed in the thymus and skin.</text>
</comment>
<comment type="miscellaneous">
    <text evidence="6">All hominoid species have a common inactivating mutation, but that Old World monkeys such as olive baboons, green monkeys, cynomolgus macaques and rhesus macaques have apparently functional SKINT1L sequences, indicating that SKINT1L is inactivated in a common ancestor of hominoids.</text>
</comment>
<comment type="similarity">
    <text evidence="5">Belongs to the SKINT family.</text>
</comment>